<proteinExistence type="evidence at protein level"/>
<keyword id="KW-0963">Cytoplasm</keyword>
<keyword id="KW-0324">Glycolysis</keyword>
<keyword id="KW-0456">Lyase</keyword>
<keyword id="KW-0460">Magnesium</keyword>
<keyword id="KW-0479">Metal-binding</keyword>
<keyword id="KW-0597">Phosphoprotein</keyword>
<keyword id="KW-1185">Reference proteome</keyword>
<dbReference type="EC" id="4.2.1.11"/>
<dbReference type="EMBL" id="U13799">
    <property type="protein sequence ID" value="AAA70080.1"/>
    <property type="molecule type" value="mRNA"/>
</dbReference>
<dbReference type="EMBL" id="L37084">
    <property type="protein sequence ID" value="AAA51399.2"/>
    <property type="molecule type" value="mRNA"/>
</dbReference>
<dbReference type="EMBL" id="CU329671">
    <property type="protein sequence ID" value="CAB43486.1"/>
    <property type="molecule type" value="Genomic_DNA"/>
</dbReference>
<dbReference type="PIR" id="JC4036">
    <property type="entry name" value="JC4036"/>
</dbReference>
<dbReference type="PIR" id="T39737">
    <property type="entry name" value="T39737"/>
</dbReference>
<dbReference type="PIR" id="T45116">
    <property type="entry name" value="T45116"/>
</dbReference>
<dbReference type="RefSeq" id="NP_595903.1">
    <property type="nucleotide sequence ID" value="NM_001021810.2"/>
</dbReference>
<dbReference type="SMR" id="P40370"/>
<dbReference type="BioGRID" id="276332">
    <property type="interactions" value="16"/>
</dbReference>
<dbReference type="FunCoup" id="P40370">
    <property type="interactions" value="407"/>
</dbReference>
<dbReference type="IntAct" id="P40370">
    <property type="interactions" value="5"/>
</dbReference>
<dbReference type="MINT" id="P40370"/>
<dbReference type="STRING" id="284812.P40370"/>
<dbReference type="iPTMnet" id="P40370"/>
<dbReference type="PaxDb" id="4896-SPBC1815.01.1"/>
<dbReference type="EnsemblFungi" id="SPBC1815.01.1">
    <property type="protein sequence ID" value="SPBC1815.01.1:pep"/>
    <property type="gene ID" value="SPBC1815.01"/>
</dbReference>
<dbReference type="GeneID" id="2539782"/>
<dbReference type="KEGG" id="spo:2539782"/>
<dbReference type="PomBase" id="SPBC1815.01">
    <property type="gene designation" value="eno101"/>
</dbReference>
<dbReference type="VEuPathDB" id="FungiDB:SPBC1815.01"/>
<dbReference type="eggNOG" id="KOG2670">
    <property type="taxonomic scope" value="Eukaryota"/>
</dbReference>
<dbReference type="HOGENOM" id="CLU_031223_0_0_1"/>
<dbReference type="InParanoid" id="P40370"/>
<dbReference type="OMA" id="RCMMSHR"/>
<dbReference type="PhylomeDB" id="P40370"/>
<dbReference type="Reactome" id="R-SPO-70171">
    <property type="pathway name" value="Glycolysis"/>
</dbReference>
<dbReference type="Reactome" id="R-SPO-70263">
    <property type="pathway name" value="Gluconeogenesis"/>
</dbReference>
<dbReference type="UniPathway" id="UPA00109">
    <property type="reaction ID" value="UER00187"/>
</dbReference>
<dbReference type="PRO" id="PR:P40370"/>
<dbReference type="Proteomes" id="UP000002485">
    <property type="component" value="Chromosome II"/>
</dbReference>
<dbReference type="GO" id="GO:0005829">
    <property type="term" value="C:cytosol"/>
    <property type="evidence" value="ECO:0007005"/>
    <property type="project" value="PomBase"/>
</dbReference>
<dbReference type="GO" id="GO:0005634">
    <property type="term" value="C:nucleus"/>
    <property type="evidence" value="ECO:0007005"/>
    <property type="project" value="PomBase"/>
</dbReference>
<dbReference type="GO" id="GO:0000015">
    <property type="term" value="C:phosphopyruvate hydratase complex"/>
    <property type="evidence" value="ECO:0000318"/>
    <property type="project" value="GO_Central"/>
</dbReference>
<dbReference type="GO" id="GO:0000287">
    <property type="term" value="F:magnesium ion binding"/>
    <property type="evidence" value="ECO:0007669"/>
    <property type="project" value="InterPro"/>
</dbReference>
<dbReference type="GO" id="GO:0004634">
    <property type="term" value="F:phosphopyruvate hydratase activity"/>
    <property type="evidence" value="ECO:0000318"/>
    <property type="project" value="GO_Central"/>
</dbReference>
<dbReference type="GO" id="GO:0061621">
    <property type="term" value="P:canonical glycolysis"/>
    <property type="evidence" value="ECO:0000255"/>
    <property type="project" value="PomBase"/>
</dbReference>
<dbReference type="GO" id="GO:0006096">
    <property type="term" value="P:glycolytic process"/>
    <property type="evidence" value="ECO:0000318"/>
    <property type="project" value="GO_Central"/>
</dbReference>
<dbReference type="CDD" id="cd03313">
    <property type="entry name" value="enolase"/>
    <property type="match status" value="1"/>
</dbReference>
<dbReference type="FunFam" id="3.30.390.10:FF:000001">
    <property type="entry name" value="Enolase"/>
    <property type="match status" value="1"/>
</dbReference>
<dbReference type="FunFam" id="3.20.20.120:FF:000002">
    <property type="entry name" value="Enolase 1"/>
    <property type="match status" value="1"/>
</dbReference>
<dbReference type="Gene3D" id="3.20.20.120">
    <property type="entry name" value="Enolase-like C-terminal domain"/>
    <property type="match status" value="1"/>
</dbReference>
<dbReference type="Gene3D" id="3.30.390.10">
    <property type="entry name" value="Enolase-like, N-terminal domain"/>
    <property type="match status" value="1"/>
</dbReference>
<dbReference type="HAMAP" id="MF_00318">
    <property type="entry name" value="Enolase"/>
    <property type="match status" value="1"/>
</dbReference>
<dbReference type="InterPro" id="IPR000941">
    <property type="entry name" value="Enolase"/>
</dbReference>
<dbReference type="InterPro" id="IPR036849">
    <property type="entry name" value="Enolase-like_C_sf"/>
</dbReference>
<dbReference type="InterPro" id="IPR029017">
    <property type="entry name" value="Enolase-like_N"/>
</dbReference>
<dbReference type="InterPro" id="IPR020810">
    <property type="entry name" value="Enolase_C"/>
</dbReference>
<dbReference type="InterPro" id="IPR020809">
    <property type="entry name" value="Enolase_CS"/>
</dbReference>
<dbReference type="InterPro" id="IPR020811">
    <property type="entry name" value="Enolase_N"/>
</dbReference>
<dbReference type="NCBIfam" id="TIGR01060">
    <property type="entry name" value="eno"/>
    <property type="match status" value="1"/>
</dbReference>
<dbReference type="PANTHER" id="PTHR11902">
    <property type="entry name" value="ENOLASE"/>
    <property type="match status" value="1"/>
</dbReference>
<dbReference type="PANTHER" id="PTHR11902:SF1">
    <property type="entry name" value="ENOLASE"/>
    <property type="match status" value="1"/>
</dbReference>
<dbReference type="Pfam" id="PF00113">
    <property type="entry name" value="Enolase_C"/>
    <property type="match status" value="1"/>
</dbReference>
<dbReference type="Pfam" id="PF03952">
    <property type="entry name" value="Enolase_N"/>
    <property type="match status" value="1"/>
</dbReference>
<dbReference type="PIRSF" id="PIRSF001400">
    <property type="entry name" value="Enolase"/>
    <property type="match status" value="1"/>
</dbReference>
<dbReference type="PRINTS" id="PR00148">
    <property type="entry name" value="ENOLASE"/>
</dbReference>
<dbReference type="SFLD" id="SFLDF00002">
    <property type="entry name" value="enolase"/>
    <property type="match status" value="1"/>
</dbReference>
<dbReference type="SFLD" id="SFLDG00178">
    <property type="entry name" value="enolase"/>
    <property type="match status" value="1"/>
</dbReference>
<dbReference type="SMART" id="SM01192">
    <property type="entry name" value="Enolase_C"/>
    <property type="match status" value="1"/>
</dbReference>
<dbReference type="SMART" id="SM01193">
    <property type="entry name" value="Enolase_N"/>
    <property type="match status" value="1"/>
</dbReference>
<dbReference type="SUPFAM" id="SSF51604">
    <property type="entry name" value="Enolase C-terminal domain-like"/>
    <property type="match status" value="1"/>
</dbReference>
<dbReference type="SUPFAM" id="SSF54826">
    <property type="entry name" value="Enolase N-terminal domain-like"/>
    <property type="match status" value="1"/>
</dbReference>
<dbReference type="PROSITE" id="PS00164">
    <property type="entry name" value="ENOLASE"/>
    <property type="match status" value="1"/>
</dbReference>
<gene>
    <name type="primary">eno101</name>
    <name type="synonym">eno1</name>
    <name type="ORF">SPBC1815.01</name>
</gene>
<protein>
    <recommendedName>
        <fullName>Enolase 1-1</fullName>
        <ecNumber>4.2.1.11</ecNumber>
    </recommendedName>
    <alternativeName>
        <fullName>2-phospho-D-glycerate hydro-lyase 1-1</fullName>
    </alternativeName>
    <alternativeName>
        <fullName>2-phosphoglycerate dehydratase 1-1</fullName>
    </alternativeName>
</protein>
<organism>
    <name type="scientific">Schizosaccharomyces pombe (strain 972 / ATCC 24843)</name>
    <name type="common">Fission yeast</name>
    <dbReference type="NCBI Taxonomy" id="284812"/>
    <lineage>
        <taxon>Eukaryota</taxon>
        <taxon>Fungi</taxon>
        <taxon>Dikarya</taxon>
        <taxon>Ascomycota</taxon>
        <taxon>Taphrinomycotina</taxon>
        <taxon>Schizosaccharomycetes</taxon>
        <taxon>Schizosaccharomycetales</taxon>
        <taxon>Schizosaccharomycetaceae</taxon>
        <taxon>Schizosaccharomyces</taxon>
    </lineage>
</organism>
<feature type="chain" id="PRO_0000134058" description="Enolase 1-1">
    <location>
        <begin position="1"/>
        <end position="439"/>
    </location>
</feature>
<feature type="active site" description="Proton donor" evidence="1">
    <location>
        <position position="211"/>
    </location>
</feature>
<feature type="active site" description="Proton acceptor" evidence="1">
    <location>
        <position position="345"/>
    </location>
</feature>
<feature type="binding site" evidence="1">
    <location>
        <position position="159"/>
    </location>
    <ligand>
        <name>substrate</name>
    </ligand>
</feature>
<feature type="binding site" evidence="1">
    <location>
        <position position="168"/>
    </location>
    <ligand>
        <name>substrate</name>
    </ligand>
</feature>
<feature type="binding site" evidence="1">
    <location>
        <position position="246"/>
    </location>
    <ligand>
        <name>Mg(2+)</name>
        <dbReference type="ChEBI" id="CHEBI:18420"/>
    </ligand>
</feature>
<feature type="binding site" evidence="1">
    <location>
        <position position="295"/>
    </location>
    <ligand>
        <name>Mg(2+)</name>
        <dbReference type="ChEBI" id="CHEBI:18420"/>
    </ligand>
</feature>
<feature type="binding site" evidence="1">
    <location>
        <position position="295"/>
    </location>
    <ligand>
        <name>substrate</name>
    </ligand>
</feature>
<feature type="binding site" evidence="1">
    <location>
        <position position="320"/>
    </location>
    <ligand>
        <name>Mg(2+)</name>
        <dbReference type="ChEBI" id="CHEBI:18420"/>
    </ligand>
</feature>
<feature type="binding site" evidence="1">
    <location>
        <position position="320"/>
    </location>
    <ligand>
        <name>substrate</name>
    </ligand>
</feature>
<feature type="binding site" evidence="1">
    <location>
        <begin position="372"/>
        <end position="375"/>
    </location>
    <ligand>
        <name>substrate</name>
    </ligand>
</feature>
<feature type="binding site" evidence="1">
    <location>
        <position position="396"/>
    </location>
    <ligand>
        <name>substrate</name>
    </ligand>
</feature>
<feature type="modified residue" description="Phosphothreonine" evidence="2">
    <location>
        <position position="85"/>
    </location>
</feature>
<feature type="modified residue" description="Phosphoserine" evidence="2">
    <location>
        <position position="249"/>
    </location>
</feature>
<feature type="modified residue" description="Phosphoserine" evidence="2">
    <location>
        <position position="250"/>
    </location>
</feature>
<feature type="modified residue" description="Phosphotyrosine" evidence="2">
    <location>
        <position position="253"/>
    </location>
</feature>
<feature type="modified residue" description="Phosphoserine" evidence="2">
    <location>
        <position position="351"/>
    </location>
</feature>
<feature type="modified residue" description="Phosphothreonine" evidence="2">
    <location>
        <position position="353"/>
    </location>
</feature>
<feature type="modified residue" description="Phosphoserine" evidence="2">
    <location>
        <position position="355"/>
    </location>
</feature>
<feature type="modified residue" description="Phosphoserine" evidence="2">
    <location>
        <position position="421"/>
    </location>
</feature>
<feature type="sequence conflict" description="In Ref. 1; AAA70080." evidence="3" ref="1">
    <original>DSR</original>
    <variation>ALG</variation>
    <location>
        <begin position="13"/>
        <end position="15"/>
    </location>
</feature>
<feature type="sequence conflict" description="In Ref. 1; AAA70080." evidence="3" ref="1">
    <original>H</original>
    <variation>Q</variation>
    <location>
        <position position="191"/>
    </location>
</feature>
<feature type="sequence conflict" description="In Ref. 1; AAA70080." evidence="3" ref="1">
    <original>A</original>
    <variation>T</variation>
    <location>
        <position position="248"/>
    </location>
</feature>
<feature type="sequence conflict" description="In Ref. 1; AAA70080." evidence="3" ref="1">
    <original>A</original>
    <variation>V</variation>
    <location>
        <position position="358"/>
    </location>
</feature>
<feature type="sequence conflict" description="In Ref. 1; AAA70080." evidence="3" ref="1">
    <original>E</original>
    <variation>G</variation>
    <location>
        <position position="377"/>
    </location>
</feature>
<feature type="sequence conflict" description="In Ref. 1; AAA70080." evidence="3" ref="1">
    <original>E</original>
    <variation>R</variation>
    <location>
        <position position="422"/>
    </location>
</feature>
<sequence length="439" mass="47436">MAIQKVFARQIYDSRGNPTVEVDLTTETGIHRAIVPSGASTGIWEALEMRDGDKTKWGGKGVLKAVGNVNNIIAPAVVKANLDVTDQKAADEFLLKLDGTENKSKLGANAILGVSMAICRAGAAQKKLPLWKYIAENFGTKGPYVLPVPSFNVLNGGSHAGGDLAFQEFMILPTGAPSFSEAMRWGAETYHTLKSIAKKRYGSSAGNVGDEGGIAPDLQTPQEALDLIVEAINKAGYEGKIKIGLDVASSEFYVDGKYDLDIKAAKPKPENKLTYQQLTDLYVELSKKYPIVSIEDPFDQDDWSAWTHMKAETDFQIVGDDLTVTNVKRLRTAIDKKCANALLLKVNQIGSVTESLNAVRMSYEAGWGVMVSHRSGETADTFISHLTVGIGAGQLKSGAPCRSERLAKYNELLRIEEELGSEGVYAGAHAGKYIKAAKF</sequence>
<evidence type="ECO:0000250" key="1"/>
<evidence type="ECO:0000269" key="2">
    <source>
    </source>
</evidence>
<evidence type="ECO:0000305" key="3"/>
<comment type="catalytic activity">
    <reaction>
        <text>(2R)-2-phosphoglycerate = phosphoenolpyruvate + H2O</text>
        <dbReference type="Rhea" id="RHEA:10164"/>
        <dbReference type="ChEBI" id="CHEBI:15377"/>
        <dbReference type="ChEBI" id="CHEBI:58289"/>
        <dbReference type="ChEBI" id="CHEBI:58702"/>
        <dbReference type="EC" id="4.2.1.11"/>
    </reaction>
</comment>
<comment type="cofactor">
    <cofactor evidence="1">
        <name>Mg(2+)</name>
        <dbReference type="ChEBI" id="CHEBI:18420"/>
    </cofactor>
    <text evidence="1">Mg(2+) is required for catalysis and for stabilizing the dimer.</text>
</comment>
<comment type="pathway">
    <text>Carbohydrate degradation; glycolysis; pyruvate from D-glyceraldehyde 3-phosphate: step 4/5.</text>
</comment>
<comment type="subunit">
    <text evidence="1">Homodimer.</text>
</comment>
<comment type="subcellular location">
    <subcellularLocation>
        <location evidence="1">Cytoplasm</location>
    </subcellularLocation>
</comment>
<comment type="similarity">
    <text evidence="3">Belongs to the enolase family.</text>
</comment>
<name>ENO11_SCHPO</name>
<accession>P40370</accession>
<accession>Q12703</accession>
<accession>Q9Y7J7</accession>
<reference key="1">
    <citation type="journal article" date="1995" name="Gene">
        <title>A cDNA from Schizosaccharomyces pombe encoding a putative enolase.</title>
        <authorList>
            <person name="Jackson J.C."/>
            <person name="Lopes J.M."/>
        </authorList>
    </citation>
    <scope>NUCLEOTIDE SEQUENCE [MRNA]</scope>
</reference>
<reference key="2">
    <citation type="submission" date="1994-11" db="EMBL/GenBank/DDBJ databases">
        <title>Cloning of enolase gene of S. pombe.</title>
        <authorList>
            <person name="Park S.-K."/>
        </authorList>
    </citation>
    <scope>NUCLEOTIDE SEQUENCE [MRNA]</scope>
</reference>
<reference key="3">
    <citation type="journal article" date="2002" name="Nature">
        <title>The genome sequence of Schizosaccharomyces pombe.</title>
        <authorList>
            <person name="Wood V."/>
            <person name="Gwilliam R."/>
            <person name="Rajandream M.A."/>
            <person name="Lyne M.H."/>
            <person name="Lyne R."/>
            <person name="Stewart A."/>
            <person name="Sgouros J.G."/>
            <person name="Peat N."/>
            <person name="Hayles J."/>
            <person name="Baker S.G."/>
            <person name="Basham D."/>
            <person name="Bowman S."/>
            <person name="Brooks K."/>
            <person name="Brown D."/>
            <person name="Brown S."/>
            <person name="Chillingworth T."/>
            <person name="Churcher C.M."/>
            <person name="Collins M."/>
            <person name="Connor R."/>
            <person name="Cronin A."/>
            <person name="Davis P."/>
            <person name="Feltwell T."/>
            <person name="Fraser A."/>
            <person name="Gentles S."/>
            <person name="Goble A."/>
            <person name="Hamlin N."/>
            <person name="Harris D.E."/>
            <person name="Hidalgo J."/>
            <person name="Hodgson G."/>
            <person name="Holroyd S."/>
            <person name="Hornsby T."/>
            <person name="Howarth S."/>
            <person name="Huckle E.J."/>
            <person name="Hunt S."/>
            <person name="Jagels K."/>
            <person name="James K.D."/>
            <person name="Jones L."/>
            <person name="Jones M."/>
            <person name="Leather S."/>
            <person name="McDonald S."/>
            <person name="McLean J."/>
            <person name="Mooney P."/>
            <person name="Moule S."/>
            <person name="Mungall K.L."/>
            <person name="Murphy L.D."/>
            <person name="Niblett D."/>
            <person name="Odell C."/>
            <person name="Oliver K."/>
            <person name="O'Neil S."/>
            <person name="Pearson D."/>
            <person name="Quail M.A."/>
            <person name="Rabbinowitsch E."/>
            <person name="Rutherford K.M."/>
            <person name="Rutter S."/>
            <person name="Saunders D."/>
            <person name="Seeger K."/>
            <person name="Sharp S."/>
            <person name="Skelton J."/>
            <person name="Simmonds M.N."/>
            <person name="Squares R."/>
            <person name="Squares S."/>
            <person name="Stevens K."/>
            <person name="Taylor K."/>
            <person name="Taylor R.G."/>
            <person name="Tivey A."/>
            <person name="Walsh S.V."/>
            <person name="Warren T."/>
            <person name="Whitehead S."/>
            <person name="Woodward J.R."/>
            <person name="Volckaert G."/>
            <person name="Aert R."/>
            <person name="Robben J."/>
            <person name="Grymonprez B."/>
            <person name="Weltjens I."/>
            <person name="Vanstreels E."/>
            <person name="Rieger M."/>
            <person name="Schaefer M."/>
            <person name="Mueller-Auer S."/>
            <person name="Gabel C."/>
            <person name="Fuchs M."/>
            <person name="Duesterhoeft A."/>
            <person name="Fritzc C."/>
            <person name="Holzer E."/>
            <person name="Moestl D."/>
            <person name="Hilbert H."/>
            <person name="Borzym K."/>
            <person name="Langer I."/>
            <person name="Beck A."/>
            <person name="Lehrach H."/>
            <person name="Reinhardt R."/>
            <person name="Pohl T.M."/>
            <person name="Eger P."/>
            <person name="Zimmermann W."/>
            <person name="Wedler H."/>
            <person name="Wambutt R."/>
            <person name="Purnelle B."/>
            <person name="Goffeau A."/>
            <person name="Cadieu E."/>
            <person name="Dreano S."/>
            <person name="Gloux S."/>
            <person name="Lelaure V."/>
            <person name="Mottier S."/>
            <person name="Galibert F."/>
            <person name="Aves S.J."/>
            <person name="Xiang Z."/>
            <person name="Hunt C."/>
            <person name="Moore K."/>
            <person name="Hurst S.M."/>
            <person name="Lucas M."/>
            <person name="Rochet M."/>
            <person name="Gaillardin C."/>
            <person name="Tallada V.A."/>
            <person name="Garzon A."/>
            <person name="Thode G."/>
            <person name="Daga R.R."/>
            <person name="Cruzado L."/>
            <person name="Jimenez J."/>
            <person name="Sanchez M."/>
            <person name="del Rey F."/>
            <person name="Benito J."/>
            <person name="Dominguez A."/>
            <person name="Revuelta J.L."/>
            <person name="Moreno S."/>
            <person name="Armstrong J."/>
            <person name="Forsburg S.L."/>
            <person name="Cerutti L."/>
            <person name="Lowe T."/>
            <person name="McCombie W.R."/>
            <person name="Paulsen I."/>
            <person name="Potashkin J."/>
            <person name="Shpakovski G.V."/>
            <person name="Ussery D."/>
            <person name="Barrell B.G."/>
            <person name="Nurse P."/>
        </authorList>
    </citation>
    <scope>NUCLEOTIDE SEQUENCE [LARGE SCALE GENOMIC DNA]</scope>
    <source>
        <strain>972 / ATCC 24843</strain>
    </source>
</reference>
<reference key="4">
    <citation type="journal article" date="2008" name="J. Proteome Res.">
        <title>Phosphoproteome analysis of fission yeast.</title>
        <authorList>
            <person name="Wilson-Grady J.T."/>
            <person name="Villen J."/>
            <person name="Gygi S.P."/>
        </authorList>
    </citation>
    <scope>PHOSPHORYLATION [LARGE SCALE ANALYSIS] AT THR-85; SER-249; SER-250; TYR-253; SER-351; THR-353; SER-355 AND SER-421</scope>
    <scope>IDENTIFICATION BY MASS SPECTROMETRY</scope>
</reference>